<organism>
    <name type="scientific">Synechococcus sp. (strain ATCC 27144 / PCC 6301 / SAUG 1402/1)</name>
    <name type="common">Anacystis nidulans</name>
    <dbReference type="NCBI Taxonomy" id="269084"/>
    <lineage>
        <taxon>Bacteria</taxon>
        <taxon>Bacillati</taxon>
        <taxon>Cyanobacteriota</taxon>
        <taxon>Cyanophyceae</taxon>
        <taxon>Synechococcales</taxon>
        <taxon>Synechococcaceae</taxon>
        <taxon>Synechococcus</taxon>
    </lineage>
</organism>
<feature type="chain" id="PRO_0000352233" description="NAD(P)H-quinone oxidoreductase subunit N">
    <location>
        <begin position="1"/>
        <end position="158"/>
    </location>
</feature>
<keyword id="KW-0472">Membrane</keyword>
<keyword id="KW-0520">NAD</keyword>
<keyword id="KW-0521">NADP</keyword>
<keyword id="KW-0618">Plastoquinone</keyword>
<keyword id="KW-0874">Quinone</keyword>
<keyword id="KW-0793">Thylakoid</keyword>
<keyword id="KW-1278">Translocase</keyword>
<keyword id="KW-0813">Transport</keyword>
<name>NDHN_SYNP6</name>
<comment type="function">
    <text evidence="1">NDH-1 shuttles electrons from an unknown electron donor, via FMN and iron-sulfur (Fe-S) centers, to quinones in the respiratory and/or the photosynthetic chain. The immediate electron acceptor for the enzyme in this species is believed to be plastoquinone. Couples the redox reaction to proton translocation, and thus conserves the redox energy in a proton gradient. Cyanobacterial NDH-1 also plays a role in inorganic carbon-concentration.</text>
</comment>
<comment type="catalytic activity">
    <reaction evidence="1">
        <text>a plastoquinone + NADH + (n+1) H(+)(in) = a plastoquinol + NAD(+) + n H(+)(out)</text>
        <dbReference type="Rhea" id="RHEA:42608"/>
        <dbReference type="Rhea" id="RHEA-COMP:9561"/>
        <dbReference type="Rhea" id="RHEA-COMP:9562"/>
        <dbReference type="ChEBI" id="CHEBI:15378"/>
        <dbReference type="ChEBI" id="CHEBI:17757"/>
        <dbReference type="ChEBI" id="CHEBI:57540"/>
        <dbReference type="ChEBI" id="CHEBI:57945"/>
        <dbReference type="ChEBI" id="CHEBI:62192"/>
    </reaction>
</comment>
<comment type="catalytic activity">
    <reaction evidence="1">
        <text>a plastoquinone + NADPH + (n+1) H(+)(in) = a plastoquinol + NADP(+) + n H(+)(out)</text>
        <dbReference type="Rhea" id="RHEA:42612"/>
        <dbReference type="Rhea" id="RHEA-COMP:9561"/>
        <dbReference type="Rhea" id="RHEA-COMP:9562"/>
        <dbReference type="ChEBI" id="CHEBI:15378"/>
        <dbReference type="ChEBI" id="CHEBI:17757"/>
        <dbReference type="ChEBI" id="CHEBI:57783"/>
        <dbReference type="ChEBI" id="CHEBI:58349"/>
        <dbReference type="ChEBI" id="CHEBI:62192"/>
    </reaction>
</comment>
<comment type="subunit">
    <text evidence="1">NDH-1 can be composed of about 15 different subunits; different subcomplexes with different compositions have been identified which probably have different functions.</text>
</comment>
<comment type="subcellular location">
    <subcellularLocation>
        <location evidence="1">Cellular thylakoid membrane</location>
        <topology evidence="1">Peripheral membrane protein</topology>
        <orientation evidence="1">Cytoplasmic side</orientation>
    </subcellularLocation>
</comment>
<comment type="similarity">
    <text evidence="1">Belongs to the complex I NdhN subunit family.</text>
</comment>
<sequence length="158" mass="17145">MALITTGSKFLRALEQEGALAVYAPLEGGYEGRYLRRLRSKGYSALTYSARGLGDPAQFLMDIHGVRPPHLGKQTIGNEAAVGRVEYVLPLVGYPLQNLPANAKGLVLWLLEGHVLSPQELSYFVTLPQAEPRLKVVIEMGGDRGFSWQPLAAVAEAA</sequence>
<reference key="1">
    <citation type="journal article" date="2007" name="Photosyn. Res.">
        <title>Complete nucleotide sequence of the freshwater unicellular cyanobacterium Synechococcus elongatus PCC 6301 chromosome: gene content and organization.</title>
        <authorList>
            <person name="Sugita C."/>
            <person name="Ogata K."/>
            <person name="Shikata M."/>
            <person name="Jikuya H."/>
            <person name="Takano J."/>
            <person name="Furumichi M."/>
            <person name="Kanehisa M."/>
            <person name="Omata T."/>
            <person name="Sugiura M."/>
            <person name="Sugita M."/>
        </authorList>
    </citation>
    <scope>NUCLEOTIDE SEQUENCE [LARGE SCALE GENOMIC DNA]</scope>
    <source>
        <strain>ATCC 27144 / PCC 6301 / SAUG 1402/1</strain>
    </source>
</reference>
<evidence type="ECO:0000255" key="1">
    <source>
        <dbReference type="HAMAP-Rule" id="MF_01353"/>
    </source>
</evidence>
<protein>
    <recommendedName>
        <fullName evidence="1">NAD(P)H-quinone oxidoreductase subunit N</fullName>
        <ecNumber evidence="1">7.1.1.-</ecNumber>
    </recommendedName>
    <alternativeName>
        <fullName evidence="1">NAD(P)H dehydrogenase I subunit N</fullName>
        <shortName evidence="1">NDH-1 subunit N</shortName>
        <shortName evidence="1">NDH-N</shortName>
    </alternativeName>
</protein>
<proteinExistence type="inferred from homology"/>
<accession>Q5N0W6</accession>
<dbReference type="EC" id="7.1.1.-" evidence="1"/>
<dbReference type="EMBL" id="AP008231">
    <property type="protein sequence ID" value="BAD80054.1"/>
    <property type="molecule type" value="Genomic_DNA"/>
</dbReference>
<dbReference type="RefSeq" id="WP_011244174.1">
    <property type="nucleotide sequence ID" value="NZ_CP085785.1"/>
</dbReference>
<dbReference type="SMR" id="Q5N0W6"/>
<dbReference type="KEGG" id="syc:syc1864_c"/>
<dbReference type="eggNOG" id="ENOG502ZBMI">
    <property type="taxonomic scope" value="Bacteria"/>
</dbReference>
<dbReference type="Proteomes" id="UP000001175">
    <property type="component" value="Chromosome"/>
</dbReference>
<dbReference type="GO" id="GO:0031676">
    <property type="term" value="C:plasma membrane-derived thylakoid membrane"/>
    <property type="evidence" value="ECO:0007669"/>
    <property type="project" value="UniProtKB-SubCell"/>
</dbReference>
<dbReference type="GO" id="GO:0016655">
    <property type="term" value="F:oxidoreductase activity, acting on NAD(P)H, quinone or similar compound as acceptor"/>
    <property type="evidence" value="ECO:0007669"/>
    <property type="project" value="UniProtKB-UniRule"/>
</dbReference>
<dbReference type="GO" id="GO:0048038">
    <property type="term" value="F:quinone binding"/>
    <property type="evidence" value="ECO:0007669"/>
    <property type="project" value="UniProtKB-KW"/>
</dbReference>
<dbReference type="HAMAP" id="MF_01353">
    <property type="entry name" value="NDH1_NDH1N"/>
    <property type="match status" value="1"/>
</dbReference>
<dbReference type="InterPro" id="IPR020874">
    <property type="entry name" value="NAD(P)H-quinone_OxRdtase_su_N"/>
</dbReference>
<dbReference type="PANTHER" id="PTHR35515">
    <property type="entry name" value="NAD(P)H-QUINONE OXIDOREDUCTASE SUBUNIT N, CHLOROPLASTIC"/>
    <property type="match status" value="1"/>
</dbReference>
<dbReference type="PANTHER" id="PTHR35515:SF1">
    <property type="entry name" value="NAD(P)H-QUINONE OXIDOREDUCTASE SUBUNIT N, CHLOROPLASTIC"/>
    <property type="match status" value="1"/>
</dbReference>
<dbReference type="Pfam" id="PF11909">
    <property type="entry name" value="NdhN"/>
    <property type="match status" value="1"/>
</dbReference>
<gene>
    <name evidence="1" type="primary">ndhN</name>
    <name type="ordered locus">syc1864_c</name>
</gene>